<evidence type="ECO:0000255" key="1">
    <source>
        <dbReference type="HAMAP-Rule" id="MF_01672"/>
    </source>
</evidence>
<organism>
    <name type="scientific">Glaesserella parasuis serovar 5 (strain SH0165)</name>
    <name type="common">Haemophilus parasuis</name>
    <dbReference type="NCBI Taxonomy" id="557723"/>
    <lineage>
        <taxon>Bacteria</taxon>
        <taxon>Pseudomonadati</taxon>
        <taxon>Pseudomonadota</taxon>
        <taxon>Gammaproteobacteria</taxon>
        <taxon>Pasteurellales</taxon>
        <taxon>Pasteurellaceae</taxon>
        <taxon>Glaesserella</taxon>
    </lineage>
</organism>
<name>IOLE_GLAP5</name>
<protein>
    <recommendedName>
        <fullName evidence="1">Inosose dehydratase</fullName>
        <ecNumber evidence="1">4.2.1.44</ecNumber>
    </recommendedName>
    <alternativeName>
        <fullName evidence="1">2-keto-myo-inositol dehydratase</fullName>
        <shortName evidence="1">2KMI dehydratase</shortName>
    </alternativeName>
</protein>
<keyword id="KW-0170">Cobalt</keyword>
<keyword id="KW-0456">Lyase</keyword>
<keyword id="KW-0464">Manganese</keyword>
<keyword id="KW-1185">Reference proteome</keyword>
<gene>
    <name evidence="1" type="primary">iolE</name>
    <name type="ordered locus">HAPS_1533</name>
</gene>
<comment type="function">
    <text evidence="1">Catalyzes the dehydration of inosose (2-keto-myo-inositol, 2KMI or 2,4,6/3,5-pentahydroxycyclohexanone) to 3D-(3,5/4)-trihydroxycyclohexane-1,2-dione (D-2,3-diketo-4-deoxy-epi-inositol).</text>
</comment>
<comment type="catalytic activity">
    <reaction evidence="1">
        <text>scyllo-inosose = 3D-3,5/4-trihydroxycyclohexane-1,2-dione + H2O</text>
        <dbReference type="Rhea" id="RHEA:14065"/>
        <dbReference type="ChEBI" id="CHEBI:15377"/>
        <dbReference type="ChEBI" id="CHEBI:17811"/>
        <dbReference type="ChEBI" id="CHEBI:28446"/>
        <dbReference type="EC" id="4.2.1.44"/>
    </reaction>
</comment>
<comment type="cofactor">
    <cofactor evidence="1">
        <name>glutathione</name>
        <dbReference type="ChEBI" id="CHEBI:57925"/>
    </cofactor>
</comment>
<comment type="cofactor">
    <cofactor evidence="1">
        <name>Co(2+)</name>
        <dbReference type="ChEBI" id="CHEBI:48828"/>
    </cofactor>
    <cofactor evidence="1">
        <name>Mn(2+)</name>
        <dbReference type="ChEBI" id="CHEBI:29035"/>
    </cofactor>
</comment>
<comment type="similarity">
    <text evidence="1">Belongs to the IolE/MocC family.</text>
</comment>
<feature type="chain" id="PRO_1000187326" description="Inosose dehydratase">
    <location>
        <begin position="1"/>
        <end position="298"/>
    </location>
</feature>
<accession>B8F6Y7</accession>
<proteinExistence type="inferred from homology"/>
<dbReference type="EC" id="4.2.1.44" evidence="1"/>
<dbReference type="EMBL" id="CP001321">
    <property type="protein sequence ID" value="ACL33089.1"/>
    <property type="molecule type" value="Genomic_DNA"/>
</dbReference>
<dbReference type="RefSeq" id="WP_015939821.1">
    <property type="nucleotide sequence ID" value="NC_011852.1"/>
</dbReference>
<dbReference type="SMR" id="B8F6Y7"/>
<dbReference type="STRING" id="557723.HAPS_1533"/>
<dbReference type="KEGG" id="hap:HAPS_1533"/>
<dbReference type="HOGENOM" id="CLU_059523_0_0_6"/>
<dbReference type="Proteomes" id="UP000006743">
    <property type="component" value="Chromosome"/>
</dbReference>
<dbReference type="GO" id="GO:0030145">
    <property type="term" value="F:manganese ion binding"/>
    <property type="evidence" value="ECO:0007669"/>
    <property type="project" value="UniProtKB-UniRule"/>
</dbReference>
<dbReference type="GO" id="GO:0050114">
    <property type="term" value="F:myo-inosose-2 dehydratase activity"/>
    <property type="evidence" value="ECO:0007669"/>
    <property type="project" value="UniProtKB-UniRule"/>
</dbReference>
<dbReference type="GO" id="GO:0019310">
    <property type="term" value="P:inositol catabolic process"/>
    <property type="evidence" value="ECO:0007669"/>
    <property type="project" value="UniProtKB-UniRule"/>
</dbReference>
<dbReference type="Gene3D" id="3.20.20.150">
    <property type="entry name" value="Divalent-metal-dependent TIM barrel enzymes"/>
    <property type="match status" value="1"/>
</dbReference>
<dbReference type="HAMAP" id="MF_01672">
    <property type="entry name" value="IolE"/>
    <property type="match status" value="1"/>
</dbReference>
<dbReference type="InterPro" id="IPR023952">
    <property type="entry name" value="IolE"/>
</dbReference>
<dbReference type="InterPro" id="IPR030823">
    <property type="entry name" value="IolE/MocC"/>
</dbReference>
<dbReference type="InterPro" id="IPR050312">
    <property type="entry name" value="IolE/XylAMocC-like"/>
</dbReference>
<dbReference type="InterPro" id="IPR036237">
    <property type="entry name" value="Xyl_isomerase-like_sf"/>
</dbReference>
<dbReference type="InterPro" id="IPR013022">
    <property type="entry name" value="Xyl_isomerase-like_TIM-brl"/>
</dbReference>
<dbReference type="NCBIfam" id="TIGR04379">
    <property type="entry name" value="myo_inos_iolE"/>
    <property type="match status" value="1"/>
</dbReference>
<dbReference type="PANTHER" id="PTHR12110">
    <property type="entry name" value="HYDROXYPYRUVATE ISOMERASE"/>
    <property type="match status" value="1"/>
</dbReference>
<dbReference type="PANTHER" id="PTHR12110:SF41">
    <property type="entry name" value="INOSOSE DEHYDRATASE"/>
    <property type="match status" value="1"/>
</dbReference>
<dbReference type="Pfam" id="PF01261">
    <property type="entry name" value="AP_endonuc_2"/>
    <property type="match status" value="1"/>
</dbReference>
<dbReference type="SUPFAM" id="SSF51658">
    <property type="entry name" value="Xylose isomerase-like"/>
    <property type="match status" value="1"/>
</dbReference>
<sequence length="298" mass="33687">MKAENIQLGIAPIGWTNDDLPELGAENTFEQCVSEMALAGYTGCEVGNKYPRDVAVLKHKLDVRGIQICNAWFSTFFVDGKREETIQEFIKHRDFLHAMGAKVIGCSEQSRSIQGTTKAVFKEKPIFNDEDWQRLAEGYNELAKLAAEKGMKVSLHHHMGTGIQTPEEVDRYMSVVNDDVYLLFDSGHLYYSEGCQKAMLAVLEKYIHRIVHVHLKDVRDEVVAEVKAKDLSFLEGVKKGTFTVPGDGVIDFKPIFDILEKYDYKGWMVVEAEQDPALANPFEYALKGRKYIREVAGV</sequence>
<reference key="1">
    <citation type="journal article" date="2009" name="J. Bacteriol.">
        <title>Complete genome sequence of Haemophilus parasuis SH0165.</title>
        <authorList>
            <person name="Yue M."/>
            <person name="Yang F."/>
            <person name="Yang J."/>
            <person name="Bei W."/>
            <person name="Cai X."/>
            <person name="Chen L."/>
            <person name="Dong J."/>
            <person name="Zhou R."/>
            <person name="Jin M."/>
            <person name="Jin Q."/>
            <person name="Chen H."/>
        </authorList>
    </citation>
    <scope>NUCLEOTIDE SEQUENCE [LARGE SCALE GENOMIC DNA]</scope>
    <source>
        <strain>SH0165</strain>
    </source>
</reference>